<accession>Q38479</accession>
<accession>Q9T1X9</accession>
<name>GP7_BPMU</name>
<gene>
    <name type="ordered locus">Mup07</name>
</gene>
<keyword id="KW-0244">Early protein</keyword>
<keyword id="KW-1035">Host cytoplasm</keyword>
<keyword id="KW-1185">Reference proteome</keyword>
<feature type="chain" id="PRO_0000077803" description="Uncharacterized protein gp7">
    <location>
        <begin position="1"/>
        <end position="87"/>
    </location>
</feature>
<feature type="sequence conflict" description="In Ref. 1; AAA32390." evidence="2" ref="1">
    <original>S</original>
    <variation>P</variation>
    <location>
        <position position="13"/>
    </location>
</feature>
<organism>
    <name type="scientific">Escherichia phage Mu</name>
    <name type="common">Bacteriophage Mu</name>
    <dbReference type="NCBI Taxonomy" id="2681603"/>
    <lineage>
        <taxon>Viruses</taxon>
        <taxon>Duplodnaviria</taxon>
        <taxon>Heunggongvirae</taxon>
        <taxon>Uroviricota</taxon>
        <taxon>Caudoviricetes</taxon>
        <taxon>Muvirus</taxon>
        <taxon>Muvirus mu</taxon>
    </lineage>
</organism>
<comment type="subcellular location">
    <subcellularLocation>
        <location evidence="2">Host cytoplasm</location>
    </subcellularLocation>
</comment>
<comment type="induction">
    <text evidence="1">Expressed in the early phase of the viral replicative cycle. Expression of early genes is repressed by viral Repc (latency) and favored by viral Ner protein.</text>
</comment>
<sequence length="87" mass="9218">MAKVIIEIKNTVSGIKGRNLRTSIAVDGSAELDGDEGTLAGMVALLVLNKSQKIINESAHEAIEILKNDGVITSGRVTEMAVEKTCH</sequence>
<evidence type="ECO:0000269" key="1">
    <source>
    </source>
</evidence>
<evidence type="ECO:0000305" key="2"/>
<reference key="1">
    <citation type="book" date="1987" name="Phage Mu">
        <title>Sequence of the left end of Mu.</title>
        <editorList>
            <person name="Symonds N."/>
            <person name="Toussaint A."/>
            <person name="van de Putte P."/>
            <person name="Howe M.M."/>
        </editorList>
        <authorList>
            <person name="Priess H."/>
            <person name="Brauer B."/>
            <person name="Schmidt C."/>
            <person name="Kamp D."/>
        </authorList>
    </citation>
    <scope>NUCLEOTIDE SEQUENCE [GENOMIC DNA]</scope>
</reference>
<reference key="2">
    <citation type="journal article" date="2002" name="J. Mol. Biol.">
        <title>Bacteriophage Mu genome sequence: analysis and comparison with Mu-like prophages in Haemophilus, Neisseria and Deinococcus.</title>
        <authorList>
            <person name="Morgan G.J."/>
            <person name="Hatfull G.F."/>
            <person name="Casjens S."/>
            <person name="Hendrix R.W."/>
        </authorList>
    </citation>
    <scope>NUCLEOTIDE SEQUENCE [LARGE SCALE GENOMIC DNA]</scope>
</reference>
<reference key="3">
    <citation type="journal article" date="1989" name="J. Bacteriol.">
        <title>Localization and regulation of bacteriophage Mu promoters.</title>
        <authorList>
            <person name="Stoddard S.F."/>
            <person name="Howe M.M."/>
        </authorList>
    </citation>
    <scope>INDUCTION</scope>
</reference>
<proteinExistence type="evidence at transcript level"/>
<dbReference type="EMBL" id="M64097">
    <property type="protein sequence ID" value="AAA32390.1"/>
    <property type="molecule type" value="Genomic_DNA"/>
</dbReference>
<dbReference type="EMBL" id="AF083977">
    <property type="protein sequence ID" value="AAF01086.1"/>
    <property type="molecule type" value="Genomic_DNA"/>
</dbReference>
<dbReference type="PIR" id="JE0004">
    <property type="entry name" value="JE0004"/>
</dbReference>
<dbReference type="RefSeq" id="NP_050611.1">
    <property type="nucleotide sequence ID" value="NC_000929.1"/>
</dbReference>
<dbReference type="GeneID" id="2636268"/>
<dbReference type="KEGG" id="vg:2636268"/>
<dbReference type="Proteomes" id="UP000002611">
    <property type="component" value="Genome"/>
</dbReference>
<dbReference type="Proteomes" id="UP000401936">
    <property type="component" value="Segment"/>
</dbReference>
<dbReference type="GO" id="GO:0030430">
    <property type="term" value="C:host cell cytoplasm"/>
    <property type="evidence" value="ECO:0007669"/>
    <property type="project" value="UniProtKB-SubCell"/>
</dbReference>
<protein>
    <recommendedName>
        <fullName>Uncharacterized protein gp7</fullName>
    </recommendedName>
    <alternativeName>
        <fullName>E6</fullName>
    </alternativeName>
    <alternativeName>
        <fullName>Gene product 7</fullName>
        <shortName>gp7</shortName>
    </alternativeName>
</protein>
<organismHost>
    <name type="scientific">Enterobacteriaceae</name>
    <dbReference type="NCBI Taxonomy" id="543"/>
</organismHost>